<reference key="1">
    <citation type="submission" date="2005-10" db="EMBL/GenBank/DDBJ databases">
        <title>Complete sequence of chromosome 1 of Burkholderia sp. 383.</title>
        <authorList>
            <consortium name="US DOE Joint Genome Institute"/>
            <person name="Copeland A."/>
            <person name="Lucas S."/>
            <person name="Lapidus A."/>
            <person name="Barry K."/>
            <person name="Detter J.C."/>
            <person name="Glavina T."/>
            <person name="Hammon N."/>
            <person name="Israni S."/>
            <person name="Pitluck S."/>
            <person name="Chain P."/>
            <person name="Malfatti S."/>
            <person name="Shin M."/>
            <person name="Vergez L."/>
            <person name="Schmutz J."/>
            <person name="Larimer F."/>
            <person name="Land M."/>
            <person name="Kyrpides N."/>
            <person name="Lykidis A."/>
            <person name="Richardson P."/>
        </authorList>
    </citation>
    <scope>NUCLEOTIDE SEQUENCE [LARGE SCALE GENOMIC DNA]</scope>
    <source>
        <strain>ATCC 17760 / DSM 23089 / LMG 22485 / NCIMB 9086 / R18194 / 383</strain>
    </source>
</reference>
<protein>
    <recommendedName>
        <fullName evidence="1">Octanoyltransferase</fullName>
        <ecNumber evidence="1">2.3.1.181</ecNumber>
    </recommendedName>
    <alternativeName>
        <fullName evidence="1">Lipoate-protein ligase B</fullName>
    </alternativeName>
    <alternativeName>
        <fullName evidence="1">Lipoyl/octanoyl transferase</fullName>
    </alternativeName>
    <alternativeName>
        <fullName evidence="1">Octanoyl-[acyl-carrier-protein]-protein N-octanoyltransferase</fullName>
    </alternativeName>
</protein>
<feature type="chain" id="PRO_0000242712" description="Octanoyltransferase">
    <location>
        <begin position="1"/>
        <end position="252"/>
    </location>
</feature>
<feature type="domain" description="BPL/LPL catalytic" evidence="2">
    <location>
        <begin position="56"/>
        <end position="237"/>
    </location>
</feature>
<feature type="active site" description="Acyl-thioester intermediate" evidence="1">
    <location>
        <position position="199"/>
    </location>
</feature>
<feature type="binding site" evidence="1">
    <location>
        <begin position="96"/>
        <end position="103"/>
    </location>
    <ligand>
        <name>substrate</name>
    </ligand>
</feature>
<feature type="binding site" evidence="1">
    <location>
        <begin position="168"/>
        <end position="170"/>
    </location>
    <ligand>
        <name>substrate</name>
    </ligand>
</feature>
<feature type="binding site" evidence="1">
    <location>
        <begin position="181"/>
        <end position="183"/>
    </location>
    <ligand>
        <name>substrate</name>
    </ligand>
</feature>
<feature type="site" description="Lowers pKa of active site Cys" evidence="1">
    <location>
        <position position="165"/>
    </location>
</feature>
<name>LIPB_BURL3</name>
<dbReference type="EC" id="2.3.1.181" evidence="1"/>
<dbReference type="EMBL" id="CP000151">
    <property type="protein sequence ID" value="ABB09825.1"/>
    <property type="molecule type" value="Genomic_DNA"/>
</dbReference>
<dbReference type="RefSeq" id="WP_011353332.1">
    <property type="nucleotide sequence ID" value="NC_007510.1"/>
</dbReference>
<dbReference type="SMR" id="Q39CJ1"/>
<dbReference type="GeneID" id="45096104"/>
<dbReference type="KEGG" id="bur:Bcep18194_A6231"/>
<dbReference type="PATRIC" id="fig|482957.22.peg.3243"/>
<dbReference type="HOGENOM" id="CLU_035168_3_1_4"/>
<dbReference type="UniPathway" id="UPA00538">
    <property type="reaction ID" value="UER00592"/>
</dbReference>
<dbReference type="Proteomes" id="UP000002705">
    <property type="component" value="Chromosome 1"/>
</dbReference>
<dbReference type="GO" id="GO:0005737">
    <property type="term" value="C:cytoplasm"/>
    <property type="evidence" value="ECO:0007669"/>
    <property type="project" value="UniProtKB-SubCell"/>
</dbReference>
<dbReference type="GO" id="GO:0033819">
    <property type="term" value="F:lipoyl(octanoyl) transferase activity"/>
    <property type="evidence" value="ECO:0007669"/>
    <property type="project" value="UniProtKB-EC"/>
</dbReference>
<dbReference type="GO" id="GO:0036211">
    <property type="term" value="P:protein modification process"/>
    <property type="evidence" value="ECO:0007669"/>
    <property type="project" value="InterPro"/>
</dbReference>
<dbReference type="CDD" id="cd16444">
    <property type="entry name" value="LipB"/>
    <property type="match status" value="1"/>
</dbReference>
<dbReference type="FunFam" id="3.30.930.10:FF:000020">
    <property type="entry name" value="Octanoyltransferase"/>
    <property type="match status" value="1"/>
</dbReference>
<dbReference type="Gene3D" id="3.30.930.10">
    <property type="entry name" value="Bira Bifunctional Protein, Domain 2"/>
    <property type="match status" value="1"/>
</dbReference>
<dbReference type="HAMAP" id="MF_00013">
    <property type="entry name" value="LipB"/>
    <property type="match status" value="1"/>
</dbReference>
<dbReference type="InterPro" id="IPR045864">
    <property type="entry name" value="aa-tRNA-synth_II/BPL/LPL"/>
</dbReference>
<dbReference type="InterPro" id="IPR004143">
    <property type="entry name" value="BPL_LPL_catalytic"/>
</dbReference>
<dbReference type="InterPro" id="IPR000544">
    <property type="entry name" value="Octanoyltransferase"/>
</dbReference>
<dbReference type="InterPro" id="IPR020605">
    <property type="entry name" value="Octanoyltransferase_CS"/>
</dbReference>
<dbReference type="NCBIfam" id="TIGR00214">
    <property type="entry name" value="lipB"/>
    <property type="match status" value="1"/>
</dbReference>
<dbReference type="NCBIfam" id="NF010922">
    <property type="entry name" value="PRK14342.1"/>
    <property type="match status" value="1"/>
</dbReference>
<dbReference type="NCBIfam" id="NF010923">
    <property type="entry name" value="PRK14343.1"/>
    <property type="match status" value="1"/>
</dbReference>
<dbReference type="PANTHER" id="PTHR10993:SF7">
    <property type="entry name" value="LIPOYLTRANSFERASE 2, MITOCHONDRIAL-RELATED"/>
    <property type="match status" value="1"/>
</dbReference>
<dbReference type="PANTHER" id="PTHR10993">
    <property type="entry name" value="OCTANOYLTRANSFERASE"/>
    <property type="match status" value="1"/>
</dbReference>
<dbReference type="Pfam" id="PF21948">
    <property type="entry name" value="LplA-B_cat"/>
    <property type="match status" value="1"/>
</dbReference>
<dbReference type="PIRSF" id="PIRSF016262">
    <property type="entry name" value="LPLase"/>
    <property type="match status" value="1"/>
</dbReference>
<dbReference type="SUPFAM" id="SSF55681">
    <property type="entry name" value="Class II aaRS and biotin synthetases"/>
    <property type="match status" value="1"/>
</dbReference>
<dbReference type="PROSITE" id="PS51733">
    <property type="entry name" value="BPL_LPL_CATALYTIC"/>
    <property type="match status" value="1"/>
</dbReference>
<dbReference type="PROSITE" id="PS01313">
    <property type="entry name" value="LIPB"/>
    <property type="match status" value="1"/>
</dbReference>
<organism>
    <name type="scientific">Burkholderia lata (strain ATCC 17760 / DSM 23089 / LMG 22485 / NCIMB 9086 / R18194 / 383)</name>
    <dbReference type="NCBI Taxonomy" id="482957"/>
    <lineage>
        <taxon>Bacteria</taxon>
        <taxon>Pseudomonadati</taxon>
        <taxon>Pseudomonadota</taxon>
        <taxon>Betaproteobacteria</taxon>
        <taxon>Burkholderiales</taxon>
        <taxon>Burkholderiaceae</taxon>
        <taxon>Burkholderia</taxon>
        <taxon>Burkholderia cepacia complex</taxon>
    </lineage>
</organism>
<keyword id="KW-0012">Acyltransferase</keyword>
<keyword id="KW-0963">Cytoplasm</keyword>
<keyword id="KW-0808">Transferase</keyword>
<sequence length="252" mass="26745">MSVSPVSIVSTPVAVSASPAGSPDQPAPPVTVRWRGVETYEASFDAMRAFTDARTADTGDEIWLVEHPPVYTLGQAGDPSHLLVADSGVPLVKVDRGGQITYHGPGQIVAYLLLDLRRRKLMVRTLVTKIEEAVIETLAAYNLASVRKAGAPGIYVASGVHEGAKIAALGLKIRNGCSYHGLSLNVKMDLRPFLAINPCGYAGLETVDMASLEVAADWNDVAHTLVRRLIANLDGASAAADKPQALEQHSND</sequence>
<gene>
    <name evidence="1" type="primary">lipB</name>
    <name type="ordered locus">Bcep18194_A6231</name>
</gene>
<comment type="function">
    <text evidence="1">Catalyzes the transfer of endogenously produced octanoic acid from octanoyl-acyl-carrier-protein onto the lipoyl domains of lipoate-dependent enzymes. Lipoyl-ACP can also act as a substrate although octanoyl-ACP is likely to be the physiological substrate.</text>
</comment>
<comment type="catalytic activity">
    <reaction evidence="1">
        <text>octanoyl-[ACP] + L-lysyl-[protein] = N(6)-octanoyl-L-lysyl-[protein] + holo-[ACP] + H(+)</text>
        <dbReference type="Rhea" id="RHEA:17665"/>
        <dbReference type="Rhea" id="RHEA-COMP:9636"/>
        <dbReference type="Rhea" id="RHEA-COMP:9685"/>
        <dbReference type="Rhea" id="RHEA-COMP:9752"/>
        <dbReference type="Rhea" id="RHEA-COMP:9928"/>
        <dbReference type="ChEBI" id="CHEBI:15378"/>
        <dbReference type="ChEBI" id="CHEBI:29969"/>
        <dbReference type="ChEBI" id="CHEBI:64479"/>
        <dbReference type="ChEBI" id="CHEBI:78463"/>
        <dbReference type="ChEBI" id="CHEBI:78809"/>
        <dbReference type="EC" id="2.3.1.181"/>
    </reaction>
</comment>
<comment type="pathway">
    <text evidence="1">Protein modification; protein lipoylation via endogenous pathway; protein N(6)-(lipoyl)lysine from octanoyl-[acyl-carrier-protein]: step 1/2.</text>
</comment>
<comment type="subcellular location">
    <subcellularLocation>
        <location evidence="1">Cytoplasm</location>
    </subcellularLocation>
</comment>
<comment type="miscellaneous">
    <text evidence="1">In the reaction, the free carboxyl group of octanoic acid is attached via an amide linkage to the epsilon-amino group of a specific lysine residue of lipoyl domains of lipoate-dependent enzymes.</text>
</comment>
<comment type="similarity">
    <text evidence="1">Belongs to the LipB family.</text>
</comment>
<proteinExistence type="inferred from homology"/>
<accession>Q39CJ1</accession>
<evidence type="ECO:0000255" key="1">
    <source>
        <dbReference type="HAMAP-Rule" id="MF_00013"/>
    </source>
</evidence>
<evidence type="ECO:0000255" key="2">
    <source>
        <dbReference type="PROSITE-ProRule" id="PRU01067"/>
    </source>
</evidence>